<name>LNT_PSEAB</name>
<proteinExistence type="inferred from homology"/>
<feature type="chain" id="PRO_1000085092" description="Apolipoprotein N-acyltransferase">
    <location>
        <begin position="1"/>
        <end position="511"/>
    </location>
</feature>
<feature type="transmembrane region" description="Helical" evidence="1">
    <location>
        <begin position="24"/>
        <end position="44"/>
    </location>
</feature>
<feature type="transmembrane region" description="Helical" evidence="1">
    <location>
        <begin position="58"/>
        <end position="78"/>
    </location>
</feature>
<feature type="transmembrane region" description="Helical" evidence="1">
    <location>
        <begin position="90"/>
        <end position="110"/>
    </location>
</feature>
<feature type="transmembrane region" description="Helical" evidence="1">
    <location>
        <begin position="125"/>
        <end position="145"/>
    </location>
</feature>
<feature type="transmembrane region" description="Helical" evidence="1">
    <location>
        <begin position="163"/>
        <end position="183"/>
    </location>
</feature>
<feature type="transmembrane region" description="Helical" evidence="1">
    <location>
        <begin position="192"/>
        <end position="212"/>
    </location>
</feature>
<feature type="transmembrane region" description="Helical" evidence="1">
    <location>
        <begin position="482"/>
        <end position="502"/>
    </location>
</feature>
<feature type="domain" description="CN hydrolase" evidence="1">
    <location>
        <begin position="230"/>
        <end position="470"/>
    </location>
</feature>
<feature type="active site" description="Proton acceptor" evidence="1">
    <location>
        <position position="269"/>
    </location>
</feature>
<feature type="active site" evidence="1">
    <location>
        <position position="330"/>
    </location>
</feature>
<feature type="active site" description="Nucleophile" evidence="1">
    <location>
        <position position="382"/>
    </location>
</feature>
<reference key="1">
    <citation type="journal article" date="2006" name="Genome Biol.">
        <title>Genomic analysis reveals that Pseudomonas aeruginosa virulence is combinatorial.</title>
        <authorList>
            <person name="Lee D.G."/>
            <person name="Urbach J.M."/>
            <person name="Wu G."/>
            <person name="Liberati N.T."/>
            <person name="Feinbaum R.L."/>
            <person name="Miyata S."/>
            <person name="Diggins L.T."/>
            <person name="He J."/>
            <person name="Saucier M."/>
            <person name="Deziel E."/>
            <person name="Friedman L."/>
            <person name="Li L."/>
            <person name="Grills G."/>
            <person name="Montgomery K."/>
            <person name="Kucherlapati R."/>
            <person name="Rahme L.G."/>
            <person name="Ausubel F.M."/>
        </authorList>
    </citation>
    <scope>NUCLEOTIDE SEQUENCE [LARGE SCALE GENOMIC DNA]</scope>
    <source>
        <strain>UCBPP-PA14</strain>
    </source>
</reference>
<organism>
    <name type="scientific">Pseudomonas aeruginosa (strain UCBPP-PA14)</name>
    <dbReference type="NCBI Taxonomy" id="208963"/>
    <lineage>
        <taxon>Bacteria</taxon>
        <taxon>Pseudomonadati</taxon>
        <taxon>Pseudomonadota</taxon>
        <taxon>Gammaproteobacteria</taxon>
        <taxon>Pseudomonadales</taxon>
        <taxon>Pseudomonadaceae</taxon>
        <taxon>Pseudomonas</taxon>
    </lineage>
</organism>
<comment type="function">
    <text evidence="1">Catalyzes the phospholipid dependent N-acylation of the N-terminal cysteine of apolipoprotein, the last step in lipoprotein maturation.</text>
</comment>
<comment type="catalytic activity">
    <reaction evidence="1">
        <text>N-terminal S-1,2-diacyl-sn-glyceryl-L-cysteinyl-[lipoprotein] + a glycerophospholipid = N-acyl-S-1,2-diacyl-sn-glyceryl-L-cysteinyl-[lipoprotein] + a 2-acyl-sn-glycero-3-phospholipid + H(+)</text>
        <dbReference type="Rhea" id="RHEA:48228"/>
        <dbReference type="Rhea" id="RHEA-COMP:14681"/>
        <dbReference type="Rhea" id="RHEA-COMP:14684"/>
        <dbReference type="ChEBI" id="CHEBI:15378"/>
        <dbReference type="ChEBI" id="CHEBI:136912"/>
        <dbReference type="ChEBI" id="CHEBI:140656"/>
        <dbReference type="ChEBI" id="CHEBI:140657"/>
        <dbReference type="ChEBI" id="CHEBI:140660"/>
        <dbReference type="EC" id="2.3.1.269"/>
    </reaction>
</comment>
<comment type="pathway">
    <text evidence="1">Protein modification; lipoprotein biosynthesis (N-acyl transfer).</text>
</comment>
<comment type="subcellular location">
    <subcellularLocation>
        <location evidence="1">Cell inner membrane</location>
        <topology evidence="1">Multi-pass membrane protein</topology>
    </subcellularLocation>
</comment>
<comment type="similarity">
    <text evidence="1">Belongs to the CN hydrolase family. Apolipoprotein N-acyltransferase subfamily.</text>
</comment>
<protein>
    <recommendedName>
        <fullName evidence="1">Apolipoprotein N-acyltransferase</fullName>
        <shortName evidence="1">ALP N-acyltransferase</shortName>
        <ecNumber evidence="1">2.3.1.269</ecNumber>
    </recommendedName>
</protein>
<sequence>MRWISRPGWPGHLLALAAGALTPLALAPFVYWPLAILSIALLYLGLRGLPGKSALWRGWWYGFGAFGAGTSWIYVSIHDYGAASVPLASFLMLGFTAGVAFFFALPAWLWARCLRRDNAPLGDALAFAALWLALELFRSWFLTGFPWLYAGYSQLQGPLAGLVPVGGVWLSSFVIALSAALLVNLPRLFPHGASLLLGLVLLLGPWAAGLYLKGHAWTHSAGEPLRVVAIQGNIAQELKWDPNQVRAQLDLYRDLSLPQQDVDLIVWPETAVPILQDMASGYLGAMGQVADEKNAALITGVPVRERLADGKSRYFNGITVVGEGAGTYLKQKLVPFGEYVPLQDLLRGLIAFFDLPMSDFARGPADQPLLKAKGYEIAPYICYEVVYPEFAAALAAQSQVLLTVSNDTWFGTSIGPLQHLQMAQMRALESGRWMIRATNNGVTGLIDPYGRIVRQIPQFQQGILRGEVIPMQGLTPYLQYRVWPLAGLAGVLLLWALLGRQLRPQERRLFG</sequence>
<accession>Q02SF2</accession>
<keyword id="KW-0012">Acyltransferase</keyword>
<keyword id="KW-0997">Cell inner membrane</keyword>
<keyword id="KW-1003">Cell membrane</keyword>
<keyword id="KW-0472">Membrane</keyword>
<keyword id="KW-0808">Transferase</keyword>
<keyword id="KW-0812">Transmembrane</keyword>
<keyword id="KW-1133">Transmembrane helix</keyword>
<evidence type="ECO:0000255" key="1">
    <source>
        <dbReference type="HAMAP-Rule" id="MF_01148"/>
    </source>
</evidence>
<dbReference type="EC" id="2.3.1.269" evidence="1"/>
<dbReference type="EMBL" id="CP000438">
    <property type="protein sequence ID" value="ABJ13259.1"/>
    <property type="molecule type" value="Genomic_DNA"/>
</dbReference>
<dbReference type="RefSeq" id="WP_003137706.1">
    <property type="nucleotide sequence ID" value="NZ_CP034244.1"/>
</dbReference>
<dbReference type="SMR" id="Q02SF2"/>
<dbReference type="KEGG" id="pau:PA14_12280"/>
<dbReference type="PseudoCAP" id="PA14_12280"/>
<dbReference type="HOGENOM" id="CLU_019563_3_0_6"/>
<dbReference type="BioCyc" id="PAER208963:G1G74-1020-MONOMER"/>
<dbReference type="UniPathway" id="UPA00666"/>
<dbReference type="Proteomes" id="UP000000653">
    <property type="component" value="Chromosome"/>
</dbReference>
<dbReference type="GO" id="GO:0005886">
    <property type="term" value="C:plasma membrane"/>
    <property type="evidence" value="ECO:0007669"/>
    <property type="project" value="UniProtKB-SubCell"/>
</dbReference>
<dbReference type="GO" id="GO:0016410">
    <property type="term" value="F:N-acyltransferase activity"/>
    <property type="evidence" value="ECO:0007669"/>
    <property type="project" value="UniProtKB-UniRule"/>
</dbReference>
<dbReference type="GO" id="GO:0042158">
    <property type="term" value="P:lipoprotein biosynthetic process"/>
    <property type="evidence" value="ECO:0007669"/>
    <property type="project" value="UniProtKB-UniRule"/>
</dbReference>
<dbReference type="CDD" id="cd07571">
    <property type="entry name" value="ALP_N-acyl_transferase"/>
    <property type="match status" value="1"/>
</dbReference>
<dbReference type="Gene3D" id="3.60.110.10">
    <property type="entry name" value="Carbon-nitrogen hydrolase"/>
    <property type="match status" value="1"/>
</dbReference>
<dbReference type="HAMAP" id="MF_01148">
    <property type="entry name" value="Lnt"/>
    <property type="match status" value="1"/>
</dbReference>
<dbReference type="InterPro" id="IPR004563">
    <property type="entry name" value="Apolipo_AcylTrfase"/>
</dbReference>
<dbReference type="InterPro" id="IPR003010">
    <property type="entry name" value="C-N_Hydrolase"/>
</dbReference>
<dbReference type="InterPro" id="IPR036526">
    <property type="entry name" value="C-N_Hydrolase_sf"/>
</dbReference>
<dbReference type="InterPro" id="IPR045378">
    <property type="entry name" value="LNT_N"/>
</dbReference>
<dbReference type="NCBIfam" id="TIGR00546">
    <property type="entry name" value="lnt"/>
    <property type="match status" value="1"/>
</dbReference>
<dbReference type="PANTHER" id="PTHR38686">
    <property type="entry name" value="APOLIPOPROTEIN N-ACYLTRANSFERASE"/>
    <property type="match status" value="1"/>
</dbReference>
<dbReference type="PANTHER" id="PTHR38686:SF1">
    <property type="entry name" value="APOLIPOPROTEIN N-ACYLTRANSFERASE"/>
    <property type="match status" value="1"/>
</dbReference>
<dbReference type="Pfam" id="PF00795">
    <property type="entry name" value="CN_hydrolase"/>
    <property type="match status" value="1"/>
</dbReference>
<dbReference type="Pfam" id="PF20154">
    <property type="entry name" value="LNT_N"/>
    <property type="match status" value="1"/>
</dbReference>
<dbReference type="SUPFAM" id="SSF56317">
    <property type="entry name" value="Carbon-nitrogen hydrolase"/>
    <property type="match status" value="1"/>
</dbReference>
<dbReference type="PROSITE" id="PS50263">
    <property type="entry name" value="CN_HYDROLASE"/>
    <property type="match status" value="1"/>
</dbReference>
<gene>
    <name evidence="1" type="primary">lnt</name>
    <name type="ordered locus">PA14_12280</name>
</gene>